<feature type="peptide" id="PRO_0000440783" description="Caerulein" evidence="2">
    <location>
        <begin position="1"/>
        <end position="10"/>
    </location>
</feature>
<feature type="modified residue" description="Pyrrolidone carboxylic acid" evidence="2">
    <location>
        <position position="1"/>
    </location>
</feature>
<feature type="modified residue" description="Sulfotyrosine; partial" evidence="5">
    <location>
        <position position="4"/>
    </location>
</feature>
<feature type="modified residue" description="Phenylalanine amide" evidence="2">
    <location>
        <position position="10"/>
    </location>
</feature>
<evidence type="ECO:0000250" key="1">
    <source>
        <dbReference type="UniProtKB" id="P86486"/>
    </source>
</evidence>
<evidence type="ECO:0000269" key="2">
    <source>
    </source>
</evidence>
<evidence type="ECO:0000303" key="3">
    <source>
    </source>
</evidence>
<evidence type="ECO:0000305" key="4"/>
<evidence type="ECO:0000305" key="5">
    <source>
    </source>
</evidence>
<keyword id="KW-0027">Amidation</keyword>
<keyword id="KW-0878">Amphibian defense peptide</keyword>
<keyword id="KW-0903">Direct protein sequencing</keyword>
<keyword id="KW-0873">Pyrrolidone carboxylic acid</keyword>
<keyword id="KW-0964">Secreted</keyword>
<keyword id="KW-0765">Sulfation</keyword>
<name>CAE_XENBM</name>
<proteinExistence type="evidence at protein level"/>
<reference evidence="4" key="1">
    <citation type="journal article" date="2015" name="Peptides">
        <title>Host-defense and trefoil factor family peptides in skin secretions of the Mawa clawed frog Xenopus boumbaensis (Pipidae).</title>
        <authorList>
            <person name="Conlon J.M."/>
            <person name="Mechkarska M."/>
            <person name="Kolodziejek J."/>
            <person name="Leprince J."/>
            <person name="Coquet L."/>
            <person name="Jouenne T."/>
            <person name="Vaudry H."/>
            <person name="Nowotny N."/>
            <person name="King J.D."/>
        </authorList>
    </citation>
    <scope>PROTEIN SEQUENCE</scope>
    <scope>SUBCELLULAR LOCATION</scope>
    <scope>MASS SPECTROMETRY</scope>
    <scope>PYROGLUTAMATE FORMATION AT GLN-1</scope>
    <scope>SULFATION AT TYR-4</scope>
    <scope>AMIDATION AT PHE-10</scope>
    <source>
        <tissue evidence="3">Skin secretion</tissue>
    </source>
</reference>
<dbReference type="GO" id="GO:0005576">
    <property type="term" value="C:extracellular region"/>
    <property type="evidence" value="ECO:0007669"/>
    <property type="project" value="UniProtKB-SubCell"/>
</dbReference>
<dbReference type="GO" id="GO:0006952">
    <property type="term" value="P:defense response"/>
    <property type="evidence" value="ECO:0007669"/>
    <property type="project" value="UniProtKB-KW"/>
</dbReference>
<dbReference type="InterPro" id="IPR013152">
    <property type="entry name" value="Gastrin/cholecystokinin_CS"/>
</dbReference>
<dbReference type="PROSITE" id="PS00259">
    <property type="entry name" value="GASTRIN"/>
    <property type="match status" value="1"/>
</dbReference>
<protein>
    <recommendedName>
        <fullName evidence="3">Caerulein</fullName>
    </recommendedName>
</protein>
<comment type="function">
    <text evidence="1">Induces contraction of intestinal smooth muscle in isolated guinea pig ileum.</text>
</comment>
<comment type="subcellular location">
    <subcellularLocation>
        <location evidence="2">Secreted</location>
    </subcellularLocation>
</comment>
<comment type="tissue specificity">
    <text evidence="5">Expressed by the skin glands.</text>
</comment>
<comment type="mass spectrometry" mass="1272.4" method="MALDI" evidence="2"/>
<comment type="similarity">
    <text evidence="4">Belongs to the gastrin/cholecystokinin family.</text>
</comment>
<accession>C0HKK7</accession>
<sequence length="10" mass="1290">QQDYTGWMDF</sequence>
<organism evidence="3">
    <name type="scientific">Xenopus boumbaensis</name>
    <name type="common">Mawa clawed frog</name>
    <dbReference type="NCBI Taxonomy" id="288550"/>
    <lineage>
        <taxon>Eukaryota</taxon>
        <taxon>Metazoa</taxon>
        <taxon>Chordata</taxon>
        <taxon>Craniata</taxon>
        <taxon>Vertebrata</taxon>
        <taxon>Euteleostomi</taxon>
        <taxon>Amphibia</taxon>
        <taxon>Batrachia</taxon>
        <taxon>Anura</taxon>
        <taxon>Pipoidea</taxon>
        <taxon>Pipidae</taxon>
        <taxon>Xenopodinae</taxon>
        <taxon>Xenopus</taxon>
        <taxon>Xenopus</taxon>
    </lineage>
</organism>